<comment type="function">
    <text evidence="1">One of the primary rRNA binding proteins, it binds directly to 16S rRNA central domain where it helps coordinate assembly of the platform of the 30S subunit.</text>
</comment>
<comment type="subunit">
    <text evidence="1">Part of the 30S ribosomal subunit. Contacts proteins S5 and S12.</text>
</comment>
<comment type="similarity">
    <text evidence="1">Belongs to the universal ribosomal protein uS8 family.</text>
</comment>
<dbReference type="EMBL" id="AE000657">
    <property type="protein sequence ID" value="AAC07538.1"/>
    <property type="molecule type" value="Genomic_DNA"/>
</dbReference>
<dbReference type="PIR" id="E70442">
    <property type="entry name" value="E70442"/>
</dbReference>
<dbReference type="RefSeq" id="NP_214132.1">
    <property type="nucleotide sequence ID" value="NC_000918.1"/>
</dbReference>
<dbReference type="RefSeq" id="WP_010881069.1">
    <property type="nucleotide sequence ID" value="NC_000918.1"/>
</dbReference>
<dbReference type="PDB" id="3RF2">
    <property type="method" value="X-ray"/>
    <property type="resolution" value="2.16 A"/>
    <property type="chains" value="A=1-168"/>
</dbReference>
<dbReference type="PDBsum" id="3RF2"/>
<dbReference type="SMR" id="O67566"/>
<dbReference type="FunCoup" id="O67566">
    <property type="interactions" value="447"/>
</dbReference>
<dbReference type="STRING" id="224324.aq_1651"/>
<dbReference type="EnsemblBacteria" id="AAC07538">
    <property type="protein sequence ID" value="AAC07538"/>
    <property type="gene ID" value="aq_1651"/>
</dbReference>
<dbReference type="KEGG" id="aae:aq_1651"/>
<dbReference type="PATRIC" id="fig|224324.8.peg.1272"/>
<dbReference type="eggNOG" id="COG0096">
    <property type="taxonomic scope" value="Bacteria"/>
</dbReference>
<dbReference type="HOGENOM" id="CLU_098428_0_2_0"/>
<dbReference type="InParanoid" id="O67566"/>
<dbReference type="OrthoDB" id="9802617at2"/>
<dbReference type="EvolutionaryTrace" id="O67566"/>
<dbReference type="Proteomes" id="UP000000798">
    <property type="component" value="Chromosome"/>
</dbReference>
<dbReference type="GO" id="GO:0022627">
    <property type="term" value="C:cytosolic small ribosomal subunit"/>
    <property type="evidence" value="ECO:0000318"/>
    <property type="project" value="GO_Central"/>
</dbReference>
<dbReference type="GO" id="GO:0019843">
    <property type="term" value="F:rRNA binding"/>
    <property type="evidence" value="ECO:0007669"/>
    <property type="project" value="UniProtKB-UniRule"/>
</dbReference>
<dbReference type="GO" id="GO:0003735">
    <property type="term" value="F:structural constituent of ribosome"/>
    <property type="evidence" value="ECO:0000318"/>
    <property type="project" value="GO_Central"/>
</dbReference>
<dbReference type="GO" id="GO:0006412">
    <property type="term" value="P:translation"/>
    <property type="evidence" value="ECO:0007669"/>
    <property type="project" value="UniProtKB-UniRule"/>
</dbReference>
<dbReference type="FunFam" id="3.30.1490.10:FF:000001">
    <property type="entry name" value="30S ribosomal protein S8"/>
    <property type="match status" value="1"/>
</dbReference>
<dbReference type="Gene3D" id="3.30.1370.30">
    <property type="match status" value="1"/>
</dbReference>
<dbReference type="Gene3D" id="3.30.1490.10">
    <property type="match status" value="1"/>
</dbReference>
<dbReference type="HAMAP" id="MF_01302_B">
    <property type="entry name" value="Ribosomal_uS8_B"/>
    <property type="match status" value="1"/>
</dbReference>
<dbReference type="InterPro" id="IPR000630">
    <property type="entry name" value="Ribosomal_uS8"/>
</dbReference>
<dbReference type="InterPro" id="IPR047863">
    <property type="entry name" value="Ribosomal_uS8_CS"/>
</dbReference>
<dbReference type="InterPro" id="IPR035987">
    <property type="entry name" value="Ribosomal_uS8_sf"/>
</dbReference>
<dbReference type="PANTHER" id="PTHR11758">
    <property type="entry name" value="40S RIBOSOMAL PROTEIN S15A"/>
    <property type="match status" value="1"/>
</dbReference>
<dbReference type="Pfam" id="PF00410">
    <property type="entry name" value="Ribosomal_S8"/>
    <property type="match status" value="1"/>
</dbReference>
<dbReference type="SUPFAM" id="SSF56047">
    <property type="entry name" value="Ribosomal protein S8"/>
    <property type="match status" value="1"/>
</dbReference>
<dbReference type="PROSITE" id="PS00053">
    <property type="entry name" value="RIBOSOMAL_S8"/>
    <property type="match status" value="1"/>
</dbReference>
<keyword id="KW-0002">3D-structure</keyword>
<keyword id="KW-1185">Reference proteome</keyword>
<keyword id="KW-0687">Ribonucleoprotein</keyword>
<keyword id="KW-0689">Ribosomal protein</keyword>
<keyword id="KW-0694">RNA-binding</keyword>
<keyword id="KW-0699">rRNA-binding</keyword>
<proteinExistence type="evidence at protein level"/>
<sequence>MSAVDPIADMFSAIKNAIMRRDDFLYVPSSKLKERILDVLKKEGFIQDWEALKGEKYEEEYKKMKELAEKSPNPKMKRYLKQLEEYNKGTQYPIKIYLKYLDPKKRKSAITNIVKVSKGGRRVYAGVRTMPYVKRGLGIAIVSTDAGVMTDHEARRMRKGGEVIAFVW</sequence>
<protein>
    <recommendedName>
        <fullName evidence="1">Small ribosomal subunit protein uS8</fullName>
    </recommendedName>
    <alternativeName>
        <fullName evidence="2">30S ribosomal protein S8</fullName>
    </alternativeName>
</protein>
<reference key="1">
    <citation type="journal article" date="1998" name="Nature">
        <title>The complete genome of the hyperthermophilic bacterium Aquifex aeolicus.</title>
        <authorList>
            <person name="Deckert G."/>
            <person name="Warren P.V."/>
            <person name="Gaasterland T."/>
            <person name="Young W.G."/>
            <person name="Lenox A.L."/>
            <person name="Graham D.E."/>
            <person name="Overbeek R."/>
            <person name="Snead M.A."/>
            <person name="Keller M."/>
            <person name="Aujay M."/>
            <person name="Huber R."/>
            <person name="Feldman R.A."/>
            <person name="Short J.M."/>
            <person name="Olsen G.J."/>
            <person name="Swanson R.V."/>
        </authorList>
    </citation>
    <scope>NUCLEOTIDE SEQUENCE [LARGE SCALE GENOMIC DNA]</scope>
    <source>
        <strain>VF5</strain>
    </source>
</reference>
<feature type="chain" id="PRO_0000126354" description="Small ribosomal subunit protein uS8">
    <location>
        <begin position="1"/>
        <end position="168"/>
    </location>
</feature>
<feature type="region of interest" description="Not found in other S8 sequences">
    <location>
        <begin position="59"/>
        <end position="93"/>
    </location>
</feature>
<feature type="helix" evidence="3">
    <location>
        <begin position="6"/>
        <end position="19"/>
    </location>
</feature>
<feature type="strand" evidence="3">
    <location>
        <begin position="23"/>
        <end position="28"/>
    </location>
</feature>
<feature type="helix" evidence="3">
    <location>
        <begin position="31"/>
        <end position="42"/>
    </location>
</feature>
<feature type="strand" evidence="3">
    <location>
        <begin position="45"/>
        <end position="51"/>
    </location>
</feature>
<feature type="helix" evidence="3">
    <location>
        <begin position="54"/>
        <end position="69"/>
    </location>
</feature>
<feature type="strand" evidence="3">
    <location>
        <begin position="74"/>
        <end position="76"/>
    </location>
</feature>
<feature type="helix" evidence="3">
    <location>
        <begin position="77"/>
        <end position="85"/>
    </location>
</feature>
<feature type="strand" evidence="3">
    <location>
        <begin position="93"/>
        <end position="98"/>
    </location>
</feature>
<feature type="strand" evidence="3">
    <location>
        <begin position="100"/>
        <end position="102"/>
    </location>
</feature>
<feature type="strand" evidence="3">
    <location>
        <begin position="107"/>
        <end position="109"/>
    </location>
</feature>
<feature type="strand" evidence="3">
    <location>
        <begin position="111"/>
        <end position="115"/>
    </location>
</feature>
<feature type="strand" evidence="3">
    <location>
        <begin position="119"/>
        <end position="121"/>
    </location>
</feature>
<feature type="helix" evidence="3">
    <location>
        <begin position="134"/>
        <end position="136"/>
    </location>
</feature>
<feature type="strand" evidence="3">
    <location>
        <begin position="138"/>
        <end position="144"/>
    </location>
</feature>
<feature type="strand" evidence="3">
    <location>
        <begin position="147"/>
        <end position="150"/>
    </location>
</feature>
<feature type="helix" evidence="3">
    <location>
        <begin position="151"/>
        <end position="156"/>
    </location>
</feature>
<feature type="strand" evidence="3">
    <location>
        <begin position="161"/>
        <end position="168"/>
    </location>
</feature>
<name>RS8_AQUAE</name>
<gene>
    <name evidence="1" type="primary">rpsH</name>
    <name type="ordered locus">aq_1651</name>
</gene>
<accession>O67566</accession>
<organism>
    <name type="scientific">Aquifex aeolicus (strain VF5)</name>
    <dbReference type="NCBI Taxonomy" id="224324"/>
    <lineage>
        <taxon>Bacteria</taxon>
        <taxon>Pseudomonadati</taxon>
        <taxon>Aquificota</taxon>
        <taxon>Aquificia</taxon>
        <taxon>Aquificales</taxon>
        <taxon>Aquificaceae</taxon>
        <taxon>Aquifex</taxon>
    </lineage>
</organism>
<evidence type="ECO:0000255" key="1">
    <source>
        <dbReference type="HAMAP-Rule" id="MF_01302"/>
    </source>
</evidence>
<evidence type="ECO:0000305" key="2"/>
<evidence type="ECO:0007829" key="3">
    <source>
        <dbReference type="PDB" id="3RF2"/>
    </source>
</evidence>